<evidence type="ECO:0000255" key="1">
    <source>
        <dbReference type="PROSITE-ProRule" id="PRU00163"/>
    </source>
</evidence>
<evidence type="ECO:0000269" key="2">
    <source>
    </source>
</evidence>
<evidence type="ECO:0000303" key="3">
    <source>
    </source>
</evidence>
<evidence type="ECO:0000303" key="4">
    <source>
    </source>
</evidence>
<evidence type="ECO:0000305" key="5"/>
<dbReference type="EMBL" id="AK292544">
    <property type="protein sequence ID" value="BAF85233.1"/>
    <property type="molecule type" value="mRNA"/>
</dbReference>
<dbReference type="EMBL" id="AK315847">
    <property type="protein sequence ID" value="BAF98738.1"/>
    <property type="molecule type" value="mRNA"/>
</dbReference>
<dbReference type="EMBL" id="AC005324">
    <property type="status" value="NOT_ANNOTATED_CDS"/>
    <property type="molecule type" value="Genomic_DNA"/>
</dbReference>
<dbReference type="EMBL" id="BC028414">
    <property type="protein sequence ID" value="AAH28414.1"/>
    <property type="molecule type" value="mRNA"/>
</dbReference>
<dbReference type="EMBL" id="BC047400">
    <property type="protein sequence ID" value="AAH47400.1"/>
    <property type="molecule type" value="mRNA"/>
</dbReference>
<dbReference type="CCDS" id="CCDS42265.1">
    <molecule id="Q86UD7-1"/>
</dbReference>
<dbReference type="RefSeq" id="NP_848666.2">
    <property type="nucleotide sequence ID" value="NM_178571.4"/>
</dbReference>
<dbReference type="SMR" id="Q86UD7"/>
<dbReference type="BioGRID" id="131653">
    <property type="interactions" value="12"/>
</dbReference>
<dbReference type="STRING" id="9606.ENSP00000410111"/>
<dbReference type="GlyGen" id="Q86UD7">
    <property type="glycosylation" value="1 site, 1 O-linked glycan (1 site)"/>
</dbReference>
<dbReference type="iPTMnet" id="Q86UD7"/>
<dbReference type="PhosphoSitePlus" id="Q86UD7"/>
<dbReference type="BioMuta" id="TBC1D26"/>
<dbReference type="DMDM" id="313104281"/>
<dbReference type="MassIVE" id="Q86UD7"/>
<dbReference type="PaxDb" id="9606-ENSP00000410111"/>
<dbReference type="Antibodypedia" id="54449">
    <property type="antibodies" value="67 antibodies from 13 providers"/>
</dbReference>
<dbReference type="DNASU" id="353149"/>
<dbReference type="Ensembl" id="ENST00000469477.3">
    <molecule id="Q86UD7-1"/>
    <property type="protein sequence ID" value="ENSP00000434391.1"/>
    <property type="gene ID" value="ENSG00000214946.15"/>
</dbReference>
<dbReference type="GeneID" id="353149"/>
<dbReference type="KEGG" id="hsa:353149"/>
<dbReference type="UCSC" id="uc010cou.2">
    <molecule id="Q86UD7-1"/>
    <property type="organism name" value="human"/>
</dbReference>
<dbReference type="AGR" id="HGNC:28745"/>
<dbReference type="CTD" id="353149"/>
<dbReference type="GeneCards" id="TBC1D26"/>
<dbReference type="HGNC" id="HGNC:28745">
    <property type="gene designation" value="TBC1D26"/>
</dbReference>
<dbReference type="neXtProt" id="NX_Q86UD7"/>
<dbReference type="PharmGKB" id="PA162405218"/>
<dbReference type="VEuPathDB" id="HostDB:ENSG00000214946"/>
<dbReference type="eggNOG" id="KOG1102">
    <property type="taxonomic scope" value="Eukaryota"/>
</dbReference>
<dbReference type="GeneTree" id="ENSGT00940000162039"/>
<dbReference type="HOGENOM" id="CLU_005350_9_0_1"/>
<dbReference type="InParanoid" id="Q86UD7"/>
<dbReference type="OMA" id="HTRSRCC"/>
<dbReference type="OrthoDB" id="9540045at2759"/>
<dbReference type="PAN-GO" id="Q86UD7">
    <property type="GO annotations" value="2 GO annotations based on evolutionary models"/>
</dbReference>
<dbReference type="PhylomeDB" id="Q86UD7"/>
<dbReference type="PathwayCommons" id="Q86UD7"/>
<dbReference type="BioGRID-ORCS" id="353149">
    <property type="hits" value="9 hits in 1044 CRISPR screens"/>
</dbReference>
<dbReference type="GenomeRNAi" id="353149"/>
<dbReference type="Pharos" id="Q86UD7">
    <property type="development level" value="Tdark"/>
</dbReference>
<dbReference type="PRO" id="PR:Q86UD7"/>
<dbReference type="Proteomes" id="UP000005640">
    <property type="component" value="Chromosome 17"/>
</dbReference>
<dbReference type="RNAct" id="Q86UD7">
    <property type="molecule type" value="protein"/>
</dbReference>
<dbReference type="Bgee" id="ENSG00000214946">
    <property type="expression patterns" value="Expressed in right testis and 88 other cell types or tissues"/>
</dbReference>
<dbReference type="ExpressionAtlas" id="Q86UD7">
    <property type="expression patterns" value="baseline and differential"/>
</dbReference>
<dbReference type="GO" id="GO:0005096">
    <property type="term" value="F:GTPase activator activity"/>
    <property type="evidence" value="ECO:0000318"/>
    <property type="project" value="GO_Central"/>
</dbReference>
<dbReference type="FunFam" id="1.10.10.750:FF:000001">
    <property type="entry name" value="TBC1 domain family member 10A"/>
    <property type="match status" value="1"/>
</dbReference>
<dbReference type="FunFam" id="1.10.8.270:FF:000016">
    <property type="entry name" value="TBC1 domain family member 2A"/>
    <property type="match status" value="1"/>
</dbReference>
<dbReference type="Gene3D" id="1.10.8.270">
    <property type="entry name" value="putative rabgap domain of human tbc1 domain family member 14 like domains"/>
    <property type="match status" value="1"/>
</dbReference>
<dbReference type="Gene3D" id="1.10.10.750">
    <property type="entry name" value="Ypt/Rab-GAP domain of gyp1p, domain 1"/>
    <property type="match status" value="1"/>
</dbReference>
<dbReference type="InterPro" id="IPR000195">
    <property type="entry name" value="Rab-GAP-TBC_dom"/>
</dbReference>
<dbReference type="InterPro" id="IPR035969">
    <property type="entry name" value="Rab-GAP_TBC_sf"/>
</dbReference>
<dbReference type="InterPro" id="IPR050302">
    <property type="entry name" value="Rab_GAP_TBC_domain"/>
</dbReference>
<dbReference type="PANTHER" id="PTHR47219">
    <property type="entry name" value="RAB GTPASE-ACTIVATING PROTEIN 1-LIKE"/>
    <property type="match status" value="1"/>
</dbReference>
<dbReference type="PANTHER" id="PTHR47219:SF25">
    <property type="entry name" value="RAB-GAP TBC DOMAIN-CONTAINING PROTEIN"/>
    <property type="match status" value="1"/>
</dbReference>
<dbReference type="Pfam" id="PF00566">
    <property type="entry name" value="RabGAP-TBC"/>
    <property type="match status" value="1"/>
</dbReference>
<dbReference type="SMART" id="SM00164">
    <property type="entry name" value="TBC"/>
    <property type="match status" value="1"/>
</dbReference>
<dbReference type="SUPFAM" id="SSF47923">
    <property type="entry name" value="Ypt/Rab-GAP domain of gyp1p"/>
    <property type="match status" value="1"/>
</dbReference>
<dbReference type="PROSITE" id="PS50086">
    <property type="entry name" value="TBC_RABGAP"/>
    <property type="match status" value="1"/>
</dbReference>
<accession>Q86UD7</accession>
<accession>A8K929</accession>
<accession>Q4G172</accession>
<comment type="function">
    <text evidence="5">May act as a GTPase-activating protein for Rab family protein(s).</text>
</comment>
<comment type="alternative products">
    <event type="alternative splicing"/>
    <isoform>
        <id>Q86UD7-1</id>
        <name>1</name>
        <sequence type="displayed"/>
    </isoform>
    <isoform>
        <id>Q86UD7-2</id>
        <name>2</name>
        <sequence type="described" ref="VSP_033827 VSP_033828"/>
    </isoform>
    <isoform>
        <id>Q86UD7-3</id>
        <name>3</name>
        <sequence type="described" ref="VSP_033825 VSP_033826"/>
    </isoform>
</comment>
<name>TBC26_HUMAN</name>
<organism>
    <name type="scientific">Homo sapiens</name>
    <name type="common">Human</name>
    <dbReference type="NCBI Taxonomy" id="9606"/>
    <lineage>
        <taxon>Eukaryota</taxon>
        <taxon>Metazoa</taxon>
        <taxon>Chordata</taxon>
        <taxon>Craniata</taxon>
        <taxon>Vertebrata</taxon>
        <taxon>Euteleostomi</taxon>
        <taxon>Mammalia</taxon>
        <taxon>Eutheria</taxon>
        <taxon>Euarchontoglires</taxon>
        <taxon>Primates</taxon>
        <taxon>Haplorrhini</taxon>
        <taxon>Catarrhini</taxon>
        <taxon>Hominidae</taxon>
        <taxon>Homo</taxon>
    </lineage>
</organism>
<gene>
    <name type="primary">TBC1D26</name>
</gene>
<proteinExistence type="evidence at transcript level"/>
<sequence>MEMDGDPYNLPAQGQGNIIITKYEQGHRAGAAVDLGHEQVDVRKYTNNLGIVHEMELPHVSALEVKQRRKESKRTNKWQKMLADWTKYRSTKKLSQRVYKVIPLAVRGRAWSLLLDIDRIKSQNPGKYKVMKEKGKRSSRIIHCIQLDVSHTLQKHMMFIQRFGVKQQELCDILVAYSAYNPEVGYHRDLSRITAILLLCLPEEDAFWALTQLLAGERHSLWYSTAQILPGSRGSYRTRSRCCTSPSQRS</sequence>
<reference key="1">
    <citation type="journal article" date="2004" name="Nat. Genet.">
        <title>Complete sequencing and characterization of 21,243 full-length human cDNAs.</title>
        <authorList>
            <person name="Ota T."/>
            <person name="Suzuki Y."/>
            <person name="Nishikawa T."/>
            <person name="Otsuki T."/>
            <person name="Sugiyama T."/>
            <person name="Irie R."/>
            <person name="Wakamatsu A."/>
            <person name="Hayashi K."/>
            <person name="Sato H."/>
            <person name="Nagai K."/>
            <person name="Kimura K."/>
            <person name="Makita H."/>
            <person name="Sekine M."/>
            <person name="Obayashi M."/>
            <person name="Nishi T."/>
            <person name="Shibahara T."/>
            <person name="Tanaka T."/>
            <person name="Ishii S."/>
            <person name="Yamamoto J."/>
            <person name="Saito K."/>
            <person name="Kawai Y."/>
            <person name="Isono Y."/>
            <person name="Nakamura Y."/>
            <person name="Nagahari K."/>
            <person name="Murakami K."/>
            <person name="Yasuda T."/>
            <person name="Iwayanagi T."/>
            <person name="Wagatsuma M."/>
            <person name="Shiratori A."/>
            <person name="Sudo H."/>
            <person name="Hosoiri T."/>
            <person name="Kaku Y."/>
            <person name="Kodaira H."/>
            <person name="Kondo H."/>
            <person name="Sugawara M."/>
            <person name="Takahashi M."/>
            <person name="Kanda K."/>
            <person name="Yokoi T."/>
            <person name="Furuya T."/>
            <person name="Kikkawa E."/>
            <person name="Omura Y."/>
            <person name="Abe K."/>
            <person name="Kamihara K."/>
            <person name="Katsuta N."/>
            <person name="Sato K."/>
            <person name="Tanikawa M."/>
            <person name="Yamazaki M."/>
            <person name="Ninomiya K."/>
            <person name="Ishibashi T."/>
            <person name="Yamashita H."/>
            <person name="Murakawa K."/>
            <person name="Fujimori K."/>
            <person name="Tanai H."/>
            <person name="Kimata M."/>
            <person name="Watanabe M."/>
            <person name="Hiraoka S."/>
            <person name="Chiba Y."/>
            <person name="Ishida S."/>
            <person name="Ono Y."/>
            <person name="Takiguchi S."/>
            <person name="Watanabe S."/>
            <person name="Yosida M."/>
            <person name="Hotuta T."/>
            <person name="Kusano J."/>
            <person name="Kanehori K."/>
            <person name="Takahashi-Fujii A."/>
            <person name="Hara H."/>
            <person name="Tanase T.-O."/>
            <person name="Nomura Y."/>
            <person name="Togiya S."/>
            <person name="Komai F."/>
            <person name="Hara R."/>
            <person name="Takeuchi K."/>
            <person name="Arita M."/>
            <person name="Imose N."/>
            <person name="Musashino K."/>
            <person name="Yuuki H."/>
            <person name="Oshima A."/>
            <person name="Sasaki N."/>
            <person name="Aotsuka S."/>
            <person name="Yoshikawa Y."/>
            <person name="Matsunawa H."/>
            <person name="Ichihara T."/>
            <person name="Shiohata N."/>
            <person name="Sano S."/>
            <person name="Moriya S."/>
            <person name="Momiyama H."/>
            <person name="Satoh N."/>
            <person name="Takami S."/>
            <person name="Terashima Y."/>
            <person name="Suzuki O."/>
            <person name="Nakagawa S."/>
            <person name="Senoh A."/>
            <person name="Mizoguchi H."/>
            <person name="Goto Y."/>
            <person name="Shimizu F."/>
            <person name="Wakebe H."/>
            <person name="Hishigaki H."/>
            <person name="Watanabe T."/>
            <person name="Sugiyama A."/>
            <person name="Takemoto M."/>
            <person name="Kawakami B."/>
            <person name="Yamazaki M."/>
            <person name="Watanabe K."/>
            <person name="Kumagai A."/>
            <person name="Itakura S."/>
            <person name="Fukuzumi Y."/>
            <person name="Fujimori Y."/>
            <person name="Komiyama M."/>
            <person name="Tashiro H."/>
            <person name="Tanigami A."/>
            <person name="Fujiwara T."/>
            <person name="Ono T."/>
            <person name="Yamada K."/>
            <person name="Fujii Y."/>
            <person name="Ozaki K."/>
            <person name="Hirao M."/>
            <person name="Ohmori Y."/>
            <person name="Kawabata A."/>
            <person name="Hikiji T."/>
            <person name="Kobatake N."/>
            <person name="Inagaki H."/>
            <person name="Ikema Y."/>
            <person name="Okamoto S."/>
            <person name="Okitani R."/>
            <person name="Kawakami T."/>
            <person name="Noguchi S."/>
            <person name="Itoh T."/>
            <person name="Shigeta K."/>
            <person name="Senba T."/>
            <person name="Matsumura K."/>
            <person name="Nakajima Y."/>
            <person name="Mizuno T."/>
            <person name="Morinaga M."/>
            <person name="Sasaki M."/>
            <person name="Togashi T."/>
            <person name="Oyama M."/>
            <person name="Hata H."/>
            <person name="Watanabe M."/>
            <person name="Komatsu T."/>
            <person name="Mizushima-Sugano J."/>
            <person name="Satoh T."/>
            <person name="Shirai Y."/>
            <person name="Takahashi Y."/>
            <person name="Nakagawa K."/>
            <person name="Okumura K."/>
            <person name="Nagase T."/>
            <person name="Nomura N."/>
            <person name="Kikuchi H."/>
            <person name="Masuho Y."/>
            <person name="Yamashita R."/>
            <person name="Nakai K."/>
            <person name="Yada T."/>
            <person name="Nakamura Y."/>
            <person name="Ohara O."/>
            <person name="Isogai T."/>
            <person name="Sugano S."/>
        </authorList>
    </citation>
    <scope>NUCLEOTIDE SEQUENCE [LARGE SCALE MRNA] (ISOFORM 2)</scope>
    <source>
        <tissue>Testis</tissue>
    </source>
</reference>
<reference key="2">
    <citation type="journal article" date="2006" name="Nature">
        <title>DNA sequence of human chromosome 17 and analysis of rearrangement in the human lineage.</title>
        <authorList>
            <person name="Zody M.C."/>
            <person name="Garber M."/>
            <person name="Adams D.J."/>
            <person name="Sharpe T."/>
            <person name="Harrow J."/>
            <person name="Lupski J.R."/>
            <person name="Nicholson C."/>
            <person name="Searle S.M."/>
            <person name="Wilming L."/>
            <person name="Young S.K."/>
            <person name="Abouelleil A."/>
            <person name="Allen N.R."/>
            <person name="Bi W."/>
            <person name="Bloom T."/>
            <person name="Borowsky M.L."/>
            <person name="Bugalter B.E."/>
            <person name="Butler J."/>
            <person name="Chang J.L."/>
            <person name="Chen C.-K."/>
            <person name="Cook A."/>
            <person name="Corum B."/>
            <person name="Cuomo C.A."/>
            <person name="de Jong P.J."/>
            <person name="DeCaprio D."/>
            <person name="Dewar K."/>
            <person name="FitzGerald M."/>
            <person name="Gilbert J."/>
            <person name="Gibson R."/>
            <person name="Gnerre S."/>
            <person name="Goldstein S."/>
            <person name="Grafham D.V."/>
            <person name="Grocock R."/>
            <person name="Hafez N."/>
            <person name="Hagopian D.S."/>
            <person name="Hart E."/>
            <person name="Norman C.H."/>
            <person name="Humphray S."/>
            <person name="Jaffe D.B."/>
            <person name="Jones M."/>
            <person name="Kamal M."/>
            <person name="Khodiyar V.K."/>
            <person name="LaButti K."/>
            <person name="Laird G."/>
            <person name="Lehoczky J."/>
            <person name="Liu X."/>
            <person name="Lokyitsang T."/>
            <person name="Loveland J."/>
            <person name="Lui A."/>
            <person name="Macdonald P."/>
            <person name="Major J.E."/>
            <person name="Matthews L."/>
            <person name="Mauceli E."/>
            <person name="McCarroll S.A."/>
            <person name="Mihalev A.H."/>
            <person name="Mudge J."/>
            <person name="Nguyen C."/>
            <person name="Nicol R."/>
            <person name="O'Leary S.B."/>
            <person name="Osoegawa K."/>
            <person name="Schwartz D.C."/>
            <person name="Shaw-Smith C."/>
            <person name="Stankiewicz P."/>
            <person name="Steward C."/>
            <person name="Swarbreck D."/>
            <person name="Venkataraman V."/>
            <person name="Whittaker C.A."/>
            <person name="Yang X."/>
            <person name="Zimmer A.R."/>
            <person name="Bradley A."/>
            <person name="Hubbard T."/>
            <person name="Birren B.W."/>
            <person name="Rogers J."/>
            <person name="Lander E.S."/>
            <person name="Nusbaum C."/>
        </authorList>
    </citation>
    <scope>NUCLEOTIDE SEQUENCE [LARGE SCALE GENOMIC DNA]</scope>
</reference>
<reference key="3">
    <citation type="journal article" date="2004" name="Genome Res.">
        <title>The status, quality, and expansion of the NIH full-length cDNA project: the Mammalian Gene Collection (MGC).</title>
        <authorList>
            <consortium name="The MGC Project Team"/>
        </authorList>
    </citation>
    <scope>NUCLEOTIDE SEQUENCE [LARGE SCALE MRNA] (ISOFORMS 1 AND 3)</scope>
    <scope>VARIANTS VAL-206 AND SER-234</scope>
    <source>
        <tissue>Testis</tissue>
    </source>
</reference>
<feature type="chain" id="PRO_0000337019" description="TBC1 domain family member 26">
    <location>
        <begin position="1"/>
        <end position="250"/>
    </location>
</feature>
<feature type="domain" description="Rab-GAP TBC" evidence="1">
    <location>
        <begin position="101"/>
        <end position="250"/>
    </location>
</feature>
<feature type="splice variant" id="VSP_033825" description="In isoform 3." evidence="4">
    <original>QRRKESKRTNKWQKMLADWT</original>
    <variation>VRACACCVGGCFRDWESGGR</variation>
    <location>
        <begin position="67"/>
        <end position="86"/>
    </location>
</feature>
<feature type="splice variant" id="VSP_033826" description="In isoform 3." evidence="4">
    <location>
        <begin position="87"/>
        <end position="250"/>
    </location>
</feature>
<feature type="splice variant" id="VSP_033827" description="In isoform 2." evidence="3">
    <original>EVGYHRDLSRITAILLLCLPEEDAFWAL</original>
    <variation>VSIPGQRYSWDMCPYSQAWVSLGGVATS</variation>
    <location>
        <begin position="183"/>
        <end position="210"/>
    </location>
</feature>
<feature type="splice variant" id="VSP_033828" description="In isoform 2." evidence="3">
    <location>
        <begin position="211"/>
        <end position="250"/>
    </location>
</feature>
<feature type="sequence variant" id="VAR_043563" description="In dbSNP:rs11650318." evidence="2">
    <original>A</original>
    <variation>V</variation>
    <location>
        <position position="206"/>
    </location>
</feature>
<feature type="sequence variant" id="VAR_047676" description="In dbSNP:rs17855672." evidence="2">
    <original>G</original>
    <variation>S</variation>
    <location>
        <position position="234"/>
    </location>
</feature>
<feature type="sequence conflict" description="In Ref. 1; BAF85233/BAF98738 and 3; AAH28414/AAH47400." evidence="5" ref="1 3">
    <original>H</original>
    <variation>R</variation>
    <location>
        <position position="59"/>
    </location>
</feature>
<protein>
    <recommendedName>
        <fullName>TBC1 domain family member 26</fullName>
    </recommendedName>
</protein>
<keyword id="KW-0025">Alternative splicing</keyword>
<keyword id="KW-0343">GTPase activation</keyword>
<keyword id="KW-1185">Reference proteome</keyword>